<accession>Q79FU0</accession>
<accession>I6XA99</accession>
<accession>L0T5C9</accession>
<organism>
    <name type="scientific">Mycobacterium tuberculosis (strain ATCC 25618 / H37Rv)</name>
    <dbReference type="NCBI Taxonomy" id="83332"/>
    <lineage>
        <taxon>Bacteria</taxon>
        <taxon>Bacillati</taxon>
        <taxon>Actinomycetota</taxon>
        <taxon>Actinomycetes</taxon>
        <taxon>Mycobacteriales</taxon>
        <taxon>Mycobacteriaceae</taxon>
        <taxon>Mycobacterium</taxon>
        <taxon>Mycobacterium tuberculosis complex</taxon>
    </lineage>
</organism>
<comment type="function">
    <text evidence="3 4">Enhances mycobacterial intracellular survival, probably via altering host macrophage cytokine profiling and attenuating the cell apoptosis (PubMed:27987050). Could be required for host endothelial-cell invasion (PubMed:16586367).</text>
</comment>
<comment type="function">
    <text evidence="4">Expression in Mycobacterium smegmatis, a nonpathogenic species naturally deficient in PE_PGRS genes, results in alteration of the production of host cytokines, including IL-6, IL-1beta, IL-10 and IL-12p40, as well as enhanced survival within macrophages largely via attenuating the apoptosis of macrophages.</text>
</comment>
<comment type="subcellular location">
    <subcellularLocation>
        <location evidence="4">Secreted</location>
        <location evidence="4">Cell wall</location>
    </subcellularLocation>
    <text evidence="4">Cell envelope-associated protein.</text>
</comment>
<comment type="induction">
    <text evidence="3">Highly up-regulated during the early stages of invasion of the human blood-brain barrier.</text>
</comment>
<comment type="disruption phenotype">
    <text evidence="3">Invasion of the infant human brain microvascular endothelial-cell monolayer is significantly decreased in transposon mutant.</text>
</comment>
<comment type="similarity">
    <text evidence="5">Belongs to the mycobacterial PE family. PGRS subfamily.</text>
</comment>
<evidence type="ECO:0000255" key="1"/>
<evidence type="ECO:0000255" key="2">
    <source>
        <dbReference type="PROSITE-ProRule" id="PRU00504"/>
    </source>
</evidence>
<evidence type="ECO:0000269" key="3">
    <source>
    </source>
</evidence>
<evidence type="ECO:0000269" key="4">
    <source>
    </source>
</evidence>
<evidence type="ECO:0000305" key="5"/>
<evidence type="ECO:0000312" key="6">
    <source>
        <dbReference type="EMBL" id="CCP43730.1"/>
    </source>
</evidence>
<gene>
    <name evidence="6" type="primary">PE_PGRS18</name>
    <name evidence="6" type="ordered locus">Rv0980c</name>
</gene>
<keyword id="KW-0134">Cell wall</keyword>
<keyword id="KW-1185">Reference proteome</keyword>
<keyword id="KW-0677">Repeat</keyword>
<keyword id="KW-0964">Secreted</keyword>
<keyword id="KW-0843">Virulence</keyword>
<sequence>MSFVNVAPQLVSTAAADAARIGSAINTANTAAAATTQVLAAAHDEVSTAIAALFGSHGQHYQAISAQVAAYQERFVLALSQASSTYAVAEAASATPLQNVLDAINAPVQSLTGRPLIGDGANGIDGTGQAGGNGGWLWGNGGNGGSGAPGQAGGAGGAAGLIGNGGAGGAGGQGLPFEAGANGGAGGAGGWLFGNGGAGGVGGAGGAGTTFGVAGGDGGTGGVGGHGGLIGVGGHGGDGGTGGTGGAVSLARAGTAGGAGGGPAGGIGGAGGVGGAGGAAGAVTTITHASFNDPHGVAVNPGGNIYVTNQGSNTVSVIDPVTNTVTGSITDGNGPSGVAVSPVTGLVFVTNFDSNTVSVIDPNTNTVTGSIPVGTGAYGVAVNPGGNIYVTNQFSNTVSVIDPATNTVTGSPIPVGLDPTGVAVNPVTGVVYVTNSLDDTVSVITGEPARSVCSAAI</sequence>
<protein>
    <recommendedName>
        <fullName evidence="5">PE-PGRS family protein PE_PGRS18</fullName>
    </recommendedName>
</protein>
<feature type="chain" id="PRO_5008177030" description="PE-PGRS family protein PE_PGRS18">
    <location>
        <begin position="1"/>
        <end position="457"/>
    </location>
</feature>
<feature type="domain" description="PE" evidence="1">
    <location>
        <begin position="1"/>
        <end position="92"/>
    </location>
</feature>
<feature type="repeat" description="NHL 1" evidence="2">
    <location>
        <begin position="291"/>
        <end position="321"/>
    </location>
</feature>
<feature type="repeat" description="NHL 2" evidence="2">
    <location>
        <begin position="333"/>
        <end position="363"/>
    </location>
</feature>
<feature type="repeat" description="NHL 3" evidence="2">
    <location>
        <begin position="379"/>
        <end position="404"/>
    </location>
</feature>
<feature type="repeat" description="NHL 4" evidence="2">
    <location>
        <begin position="419"/>
        <end position="447"/>
    </location>
</feature>
<name>PG18_MYCTU</name>
<reference key="1">
    <citation type="journal article" date="1998" name="Nature">
        <title>Deciphering the biology of Mycobacterium tuberculosis from the complete genome sequence.</title>
        <authorList>
            <person name="Cole S.T."/>
            <person name="Brosch R."/>
            <person name="Parkhill J."/>
            <person name="Garnier T."/>
            <person name="Churcher C.M."/>
            <person name="Harris D.E."/>
            <person name="Gordon S.V."/>
            <person name="Eiglmeier K."/>
            <person name="Gas S."/>
            <person name="Barry C.E. III"/>
            <person name="Tekaia F."/>
            <person name="Badcock K."/>
            <person name="Basham D."/>
            <person name="Brown D."/>
            <person name="Chillingworth T."/>
            <person name="Connor R."/>
            <person name="Davies R.M."/>
            <person name="Devlin K."/>
            <person name="Feltwell T."/>
            <person name="Gentles S."/>
            <person name="Hamlin N."/>
            <person name="Holroyd S."/>
            <person name="Hornsby T."/>
            <person name="Jagels K."/>
            <person name="Krogh A."/>
            <person name="McLean J."/>
            <person name="Moule S."/>
            <person name="Murphy L.D."/>
            <person name="Oliver S."/>
            <person name="Osborne J."/>
            <person name="Quail M.A."/>
            <person name="Rajandream M.A."/>
            <person name="Rogers J."/>
            <person name="Rutter S."/>
            <person name="Seeger K."/>
            <person name="Skelton S."/>
            <person name="Squares S."/>
            <person name="Squares R."/>
            <person name="Sulston J.E."/>
            <person name="Taylor K."/>
            <person name="Whitehead S."/>
            <person name="Barrell B.G."/>
        </authorList>
    </citation>
    <scope>NUCLEOTIDE SEQUENCE [LARGE SCALE GENOMIC DNA]</scope>
    <source>
        <strain>ATCC 25618 / H37Rv</strain>
    </source>
</reference>
<reference key="2">
    <citation type="journal article" date="2006" name="J. Infect. Dis.">
        <title>Mycobacterium tuberculosis invasion and traversal across an in vitro human blood-brain barrier as a pathogenic mechanism for central nervous system tuberculosis.</title>
        <authorList>
            <person name="Jain S.K."/>
            <person name="Paul-Satyaseela M."/>
            <person name="Lamichhane G."/>
            <person name="Kim K.S."/>
            <person name="Bishai W.R."/>
        </authorList>
    </citation>
    <scope>FUNCTION</scope>
    <scope>INDUCTION</scope>
    <scope>DISRUPTION PHENOTYPE</scope>
    <source>
        <strain>ATCC 25618 / H37Rv</strain>
    </source>
</reference>
<reference key="3">
    <citation type="journal article" date="2017" name="Apoptosis">
        <title>Mycobacterium tuberculosis PE_PGRS18 enhances the intracellular survival of M. smegmatis via altering host macrophage cytokine profiling and attenuating the cell apoptosis.</title>
        <authorList>
            <person name="Yang W."/>
            <person name="Deng W."/>
            <person name="Zeng J."/>
            <person name="Ren S."/>
            <person name="Ali M.K."/>
            <person name="Gu Y."/>
            <person name="Li Y."/>
            <person name="Xie J."/>
        </authorList>
    </citation>
    <scope>FUNCTION</scope>
    <scope>EXPRESSION IN M.SMEGMATIS</scope>
    <scope>SUBCELLULAR LOCATION</scope>
</reference>
<proteinExistence type="evidence at transcript level"/>
<dbReference type="EMBL" id="AL123456">
    <property type="protein sequence ID" value="CCP43730.1"/>
    <property type="molecule type" value="Genomic_DNA"/>
</dbReference>
<dbReference type="RefSeq" id="WP_010886100.1">
    <property type="nucleotide sequence ID" value="NZ_NVQJ01000018.1"/>
</dbReference>
<dbReference type="RefSeq" id="YP_177775.1">
    <property type="nucleotide sequence ID" value="NC_000962.3"/>
</dbReference>
<dbReference type="SMR" id="Q79FU0"/>
<dbReference type="STRING" id="83332.Rv0980c"/>
<dbReference type="PaxDb" id="83332-Rv0980c"/>
<dbReference type="GeneID" id="885327"/>
<dbReference type="KEGG" id="mtu:Rv0980c"/>
<dbReference type="KEGG" id="mtv:RVBD_0980c"/>
<dbReference type="PATRIC" id="fig|83332.111.peg.1088"/>
<dbReference type="TubercuList" id="Rv0980c"/>
<dbReference type="eggNOG" id="COG3391">
    <property type="taxonomic scope" value="Bacteria"/>
</dbReference>
<dbReference type="HOGENOM" id="CLU_000167_16_4_11"/>
<dbReference type="InParanoid" id="Q79FU0"/>
<dbReference type="OrthoDB" id="4751565at2"/>
<dbReference type="PhylomeDB" id="Q79FU0"/>
<dbReference type="Proteomes" id="UP000001584">
    <property type="component" value="Chromosome"/>
</dbReference>
<dbReference type="GO" id="GO:0005576">
    <property type="term" value="C:extracellular region"/>
    <property type="evidence" value="ECO:0007669"/>
    <property type="project" value="UniProtKB-KW"/>
</dbReference>
<dbReference type="CDD" id="cd05819">
    <property type="entry name" value="NHL"/>
    <property type="match status" value="1"/>
</dbReference>
<dbReference type="Gene3D" id="1.10.287.850">
    <property type="entry name" value="HP0062-like domain"/>
    <property type="match status" value="1"/>
</dbReference>
<dbReference type="Gene3D" id="2.130.10.10">
    <property type="entry name" value="YVTN repeat-like/Quinoprotein amine dehydrogenase"/>
    <property type="match status" value="2"/>
</dbReference>
<dbReference type="InterPro" id="IPR051200">
    <property type="entry name" value="Host-pathogen_enzymatic-act"/>
</dbReference>
<dbReference type="InterPro" id="IPR011045">
    <property type="entry name" value="N2O_reductase_N"/>
</dbReference>
<dbReference type="InterPro" id="IPR001258">
    <property type="entry name" value="NHL_repeat"/>
</dbReference>
<dbReference type="InterPro" id="IPR000084">
    <property type="entry name" value="PE-PGRS_N"/>
</dbReference>
<dbReference type="InterPro" id="IPR048996">
    <property type="entry name" value="PGRS_rpt"/>
</dbReference>
<dbReference type="InterPro" id="IPR015943">
    <property type="entry name" value="WD40/YVTN_repeat-like_dom_sf"/>
</dbReference>
<dbReference type="InterPro" id="IPR011964">
    <property type="entry name" value="YVTN_b-propeller_repeat"/>
</dbReference>
<dbReference type="NCBIfam" id="TIGR02276">
    <property type="entry name" value="beta_rpt_yvtn"/>
    <property type="match status" value="3"/>
</dbReference>
<dbReference type="PANTHER" id="PTHR47197:SF3">
    <property type="entry name" value="DIHYDRO-HEME D1 DEHYDROGENASE"/>
    <property type="match status" value="1"/>
</dbReference>
<dbReference type="PANTHER" id="PTHR47197">
    <property type="entry name" value="PROTEIN NIRF"/>
    <property type="match status" value="1"/>
</dbReference>
<dbReference type="Pfam" id="PF01436">
    <property type="entry name" value="NHL"/>
    <property type="match status" value="1"/>
</dbReference>
<dbReference type="Pfam" id="PF00934">
    <property type="entry name" value="PE"/>
    <property type="match status" value="1"/>
</dbReference>
<dbReference type="Pfam" id="PF21526">
    <property type="entry name" value="PGRS"/>
    <property type="match status" value="1"/>
</dbReference>
<dbReference type="SUPFAM" id="SSF50974">
    <property type="entry name" value="Nitrous oxide reductase, N-terminal domain"/>
    <property type="match status" value="1"/>
</dbReference>
<dbReference type="SUPFAM" id="SSF140459">
    <property type="entry name" value="PE/PPE dimer-like"/>
    <property type="match status" value="1"/>
</dbReference>
<dbReference type="PROSITE" id="PS51125">
    <property type="entry name" value="NHL"/>
    <property type="match status" value="4"/>
</dbReference>